<protein>
    <recommendedName>
        <fullName evidence="1">ATP-dependent Clp protease proteolytic subunit</fullName>
        <ecNumber evidence="1">3.4.21.92</ecNumber>
    </recommendedName>
    <alternativeName>
        <fullName evidence="1">Endopeptidase Clp</fullName>
    </alternativeName>
</protein>
<accession>A6H5K6</accession>
<sequence>MPIGVPKVPFRIPGEEDNRLYRERLLFPGQQVDDEIANQLIGIMMYLNGEDENKDIYPYINSPGGAVIPGISIYDAMQFVVPDVHTICMGLAASMGSSVLTGGEITKRIALPHARVMIHQPASSYYDGQAGECIMEAEEVLKLRDSITNVYVQRTGKPLWVISGDMERDVFMSATEAQAYGIVDLVAVENTEDLL</sequence>
<evidence type="ECO:0000255" key="1">
    <source>
        <dbReference type="HAMAP-Rule" id="MF_00444"/>
    </source>
</evidence>
<geneLocation type="chloroplast"/>
<feature type="chain" id="PRO_0000309298" description="ATP-dependent Clp protease proteolytic subunit">
    <location>
        <begin position="1"/>
        <end position="195"/>
    </location>
</feature>
<feature type="active site" description="Nucleophile" evidence="1">
    <location>
        <position position="94"/>
    </location>
</feature>
<feature type="active site" evidence="1">
    <location>
        <position position="119"/>
    </location>
</feature>
<comment type="function">
    <text evidence="1">Cleaves peptides in various proteins in a process that requires ATP hydrolysis. Has a chymotrypsin-like activity. Plays a major role in the degradation of misfolded proteins.</text>
</comment>
<comment type="catalytic activity">
    <reaction evidence="1">
        <text>Hydrolysis of proteins to small peptides in the presence of ATP and magnesium. alpha-casein is the usual test substrate. In the absence of ATP, only oligopeptides shorter than five residues are hydrolyzed (such as succinyl-Leu-Tyr-|-NHMec, and Leu-Tyr-Leu-|-Tyr-Trp, in which cleavage of the -Tyr-|-Leu- and -Tyr-|-Trp bonds also occurs).</text>
        <dbReference type="EC" id="3.4.21.92"/>
    </reaction>
</comment>
<comment type="subunit">
    <text>Component of the chloroplastic Clp protease core complex.</text>
</comment>
<comment type="subcellular location">
    <subcellularLocation>
        <location evidence="1">Plastid</location>
        <location evidence="1">Chloroplast stroma</location>
    </subcellularLocation>
</comment>
<comment type="similarity">
    <text evidence="1">Belongs to the peptidase S14 family.</text>
</comment>
<dbReference type="EC" id="3.4.21.92" evidence="1"/>
<dbReference type="EMBL" id="AP009339">
    <property type="protein sequence ID" value="BAF64972.1"/>
    <property type="molecule type" value="Genomic_DNA"/>
</dbReference>
<dbReference type="RefSeq" id="YP_001312231.1">
    <property type="nucleotide sequence ID" value="NC_009618.1"/>
</dbReference>
<dbReference type="SMR" id="A6H5K6"/>
<dbReference type="MEROPS" id="S14.002"/>
<dbReference type="GeneID" id="5309497"/>
<dbReference type="GO" id="GO:0009570">
    <property type="term" value="C:chloroplast stroma"/>
    <property type="evidence" value="ECO:0007669"/>
    <property type="project" value="UniProtKB-SubCell"/>
</dbReference>
<dbReference type="GO" id="GO:0009368">
    <property type="term" value="C:endopeptidase Clp complex"/>
    <property type="evidence" value="ECO:0007669"/>
    <property type="project" value="TreeGrafter"/>
</dbReference>
<dbReference type="GO" id="GO:0004176">
    <property type="term" value="F:ATP-dependent peptidase activity"/>
    <property type="evidence" value="ECO:0007669"/>
    <property type="project" value="InterPro"/>
</dbReference>
<dbReference type="GO" id="GO:0051117">
    <property type="term" value="F:ATPase binding"/>
    <property type="evidence" value="ECO:0007669"/>
    <property type="project" value="TreeGrafter"/>
</dbReference>
<dbReference type="GO" id="GO:0004252">
    <property type="term" value="F:serine-type endopeptidase activity"/>
    <property type="evidence" value="ECO:0007669"/>
    <property type="project" value="UniProtKB-UniRule"/>
</dbReference>
<dbReference type="GO" id="GO:0006515">
    <property type="term" value="P:protein quality control for misfolded or incompletely synthesized proteins"/>
    <property type="evidence" value="ECO:0007669"/>
    <property type="project" value="TreeGrafter"/>
</dbReference>
<dbReference type="CDD" id="cd07017">
    <property type="entry name" value="S14_ClpP_2"/>
    <property type="match status" value="1"/>
</dbReference>
<dbReference type="FunFam" id="3.90.226.10:FF:000006">
    <property type="entry name" value="ATP-dependent Clp protease proteolytic subunit"/>
    <property type="match status" value="1"/>
</dbReference>
<dbReference type="Gene3D" id="3.90.226.10">
    <property type="entry name" value="2-enoyl-CoA Hydratase, Chain A, domain 1"/>
    <property type="match status" value="1"/>
</dbReference>
<dbReference type="HAMAP" id="MF_00444">
    <property type="entry name" value="ClpP"/>
    <property type="match status" value="1"/>
</dbReference>
<dbReference type="InterPro" id="IPR001907">
    <property type="entry name" value="ClpP"/>
</dbReference>
<dbReference type="InterPro" id="IPR029045">
    <property type="entry name" value="ClpP/crotonase-like_dom_sf"/>
</dbReference>
<dbReference type="InterPro" id="IPR023562">
    <property type="entry name" value="ClpP/TepA"/>
</dbReference>
<dbReference type="InterPro" id="IPR033135">
    <property type="entry name" value="ClpP_His_AS"/>
</dbReference>
<dbReference type="InterPro" id="IPR018215">
    <property type="entry name" value="ClpP_Ser_AS"/>
</dbReference>
<dbReference type="PANTHER" id="PTHR10381">
    <property type="entry name" value="ATP-DEPENDENT CLP PROTEASE PROTEOLYTIC SUBUNIT"/>
    <property type="match status" value="1"/>
</dbReference>
<dbReference type="PANTHER" id="PTHR10381:SF15">
    <property type="entry name" value="CHLOROPLASTIC ATP-DEPENDENT CLP PROTEASE PROTEOLYTIC SUBUNIT 1"/>
    <property type="match status" value="1"/>
</dbReference>
<dbReference type="Pfam" id="PF00574">
    <property type="entry name" value="CLP_protease"/>
    <property type="match status" value="1"/>
</dbReference>
<dbReference type="PRINTS" id="PR00127">
    <property type="entry name" value="CLPPROTEASEP"/>
</dbReference>
<dbReference type="SUPFAM" id="SSF52096">
    <property type="entry name" value="ClpP/crotonase"/>
    <property type="match status" value="1"/>
</dbReference>
<dbReference type="PROSITE" id="PS00382">
    <property type="entry name" value="CLP_PROTEASE_HIS"/>
    <property type="match status" value="1"/>
</dbReference>
<dbReference type="PROSITE" id="PS00381">
    <property type="entry name" value="CLP_PROTEASE_SER"/>
    <property type="match status" value="1"/>
</dbReference>
<name>CLPP_CYCTA</name>
<organism>
    <name type="scientific">Cycas taitungensis</name>
    <name type="common">Prince sago</name>
    <name type="synonym">Cycas taiwaniana</name>
    <dbReference type="NCBI Taxonomy" id="54799"/>
    <lineage>
        <taxon>Eukaryota</taxon>
        <taxon>Viridiplantae</taxon>
        <taxon>Streptophyta</taxon>
        <taxon>Embryophyta</taxon>
        <taxon>Tracheophyta</taxon>
        <taxon>Spermatophyta</taxon>
        <taxon>Cycadidae</taxon>
        <taxon>Cycadales</taxon>
        <taxon>Cycadaceae</taxon>
        <taxon>Cycas</taxon>
    </lineage>
</organism>
<gene>
    <name evidence="1" type="primary">clpP</name>
</gene>
<keyword id="KW-0150">Chloroplast</keyword>
<keyword id="KW-0378">Hydrolase</keyword>
<keyword id="KW-0934">Plastid</keyword>
<keyword id="KW-0645">Protease</keyword>
<keyword id="KW-0720">Serine protease</keyword>
<reference key="1">
    <citation type="journal article" date="2007" name="Mol. Biol. Evol.">
        <title>Chloroplast genome (cpDNA) of Cycas taitungensis and 56 cp protein-coding genes of Gnetum parvifolium: insights into cpDNA evolution and phylogeny of extant seed plants.</title>
        <authorList>
            <person name="Wu C.-S."/>
            <person name="Wang Y.-N."/>
            <person name="Liu S.-M."/>
            <person name="Chaw S.-M."/>
        </authorList>
    </citation>
    <scope>NUCLEOTIDE SEQUENCE [LARGE SCALE GENOMIC DNA]</scope>
</reference>
<proteinExistence type="inferred from homology"/>